<organism>
    <name type="scientific">Homo sapiens</name>
    <name type="common">Human</name>
    <dbReference type="NCBI Taxonomy" id="9606"/>
    <lineage>
        <taxon>Eukaryota</taxon>
        <taxon>Metazoa</taxon>
        <taxon>Chordata</taxon>
        <taxon>Craniata</taxon>
        <taxon>Vertebrata</taxon>
        <taxon>Euteleostomi</taxon>
        <taxon>Mammalia</taxon>
        <taxon>Eutheria</taxon>
        <taxon>Euarchontoglires</taxon>
        <taxon>Primates</taxon>
        <taxon>Haplorrhini</taxon>
        <taxon>Catarrhini</taxon>
        <taxon>Hominidae</taxon>
        <taxon>Homo</taxon>
    </lineage>
</organism>
<sequence>MTHQDLSITAKLINGGVAGLVGVTCVFPIDLAKTRLQNQHGKAMYKGMIDCLMKTARAEGFFGMYRGAAVNLTLVTPEKAIKLAANDFFRRLLMEDGMQRNLKMEMLAGCGAGMCQVVVTCPMEMLKIQLQDAGRLAVHHQGSASAPSTSRSYTTGSASTHRRPSATLIAWELLRTQGLAGLYRGLGATLLRDIPFSIIYFPLFANLNNLGFNELAGKASFAHSFVSGCVAGSIAAVAVTPLDVLKTRIQTLKKGLGEDMYSGITDCARKLWIQEGPSAFMKGAGCRALVIAPLFGIAQGVYFIGIGERILKCFD</sequence>
<evidence type="ECO:0000250" key="1">
    <source>
        <dbReference type="UniProtKB" id="Q505J6"/>
    </source>
</evidence>
<evidence type="ECO:0000255" key="2"/>
<evidence type="ECO:0000255" key="3">
    <source>
        <dbReference type="PROSITE-ProRule" id="PRU00282"/>
    </source>
</evidence>
<evidence type="ECO:0000256" key="4">
    <source>
        <dbReference type="SAM" id="MobiDB-lite"/>
    </source>
</evidence>
<evidence type="ECO:0000269" key="5">
    <source>
    </source>
</evidence>
<evidence type="ECO:0000305" key="6"/>
<evidence type="ECO:0000312" key="7">
    <source>
        <dbReference type="HGNC" id="HGNC:10988"/>
    </source>
</evidence>
<evidence type="ECO:0007744" key="8">
    <source>
    </source>
</evidence>
<accession>Q9H1K4</accession>
<feature type="chain" id="PRO_0000090621" description="Mitochondrial glutamate carrier 2">
    <location>
        <begin position="1"/>
        <end position="315"/>
    </location>
</feature>
<feature type="transmembrane region" description="Helical; Name=1" evidence="2">
    <location>
        <begin position="12"/>
        <end position="32"/>
    </location>
</feature>
<feature type="transmembrane region" description="Helical; Name=2" evidence="2">
    <location>
        <begin position="61"/>
        <end position="81"/>
    </location>
</feature>
<feature type="transmembrane region" description="Helical; Name=3" evidence="2">
    <location>
        <begin position="106"/>
        <end position="126"/>
    </location>
</feature>
<feature type="transmembrane region" description="Helical; Name=4" evidence="2">
    <location>
        <begin position="185"/>
        <end position="205"/>
    </location>
</feature>
<feature type="transmembrane region" description="Helical; Name=5" evidence="2">
    <location>
        <begin position="225"/>
        <end position="245"/>
    </location>
</feature>
<feature type="transmembrane region" description="Helical; Name=6" evidence="2">
    <location>
        <begin position="288"/>
        <end position="308"/>
    </location>
</feature>
<feature type="repeat" description="Solcar 1" evidence="3">
    <location>
        <begin position="6"/>
        <end position="92"/>
    </location>
</feature>
<feature type="repeat" description="Solcar 2" evidence="3">
    <location>
        <begin position="100"/>
        <end position="210"/>
    </location>
</feature>
<feature type="repeat" description="Solcar 3" evidence="3">
    <location>
        <begin position="219"/>
        <end position="308"/>
    </location>
</feature>
<feature type="region of interest" description="Disordered" evidence="4">
    <location>
        <begin position="141"/>
        <end position="160"/>
    </location>
</feature>
<feature type="compositionally biased region" description="Polar residues" evidence="4">
    <location>
        <begin position="142"/>
        <end position="159"/>
    </location>
</feature>
<feature type="modified residue" description="Phosphoserine" evidence="8">
    <location>
        <position position="145"/>
    </location>
</feature>
<gene>
    <name evidence="7" type="primary">SLC25A18</name>
    <name type="synonym">GC2</name>
</gene>
<comment type="function">
    <text evidence="5">Responsible for the transport of glutamate from the cytosol into the mitochondrial matrix with the concomitant import of a proton (symport system).</text>
</comment>
<comment type="catalytic activity">
    <reaction evidence="5">
        <text>L-glutamate(in) + H(+)(in) = L-glutamate(out) + H(+)(out)</text>
        <dbReference type="Rhea" id="RHEA:70955"/>
        <dbReference type="ChEBI" id="CHEBI:15378"/>
        <dbReference type="ChEBI" id="CHEBI:29985"/>
    </reaction>
</comment>
<comment type="biophysicochemical properties">
    <kinetics>
        <KM evidence="5">0.26 mM for glutamate</KM>
        <Vmax evidence="5">15.7 umol/min/g enzyme with glutamate as substrate</Vmax>
    </kinetics>
</comment>
<comment type="interaction">
    <interactant intactId="EBI-6269587">
        <id>Q9H1K4</id>
    </interactant>
    <interactant intactId="EBI-3867333">
        <id>A8MQ03</id>
        <label>CYSRT1</label>
    </interactant>
    <organismsDiffer>false</organismsDiffer>
    <experiments>3</experiments>
</comment>
<comment type="interaction">
    <interactant intactId="EBI-6269587">
        <id>Q9H1K4</id>
    </interactant>
    <interactant intactId="EBI-349832">
        <id>Q9HD26</id>
        <label>GOPC</label>
    </interactant>
    <organismsDiffer>false</organismsDiffer>
    <experiments>3</experiments>
</comment>
<comment type="interaction">
    <interactant intactId="EBI-6269587">
        <id>Q9H1K4</id>
    </interactant>
    <interactant intactId="EBI-11953846">
        <id>Q52LG2</id>
        <label>KRTAP13-2</label>
    </interactant>
    <organismsDiffer>false</organismsDiffer>
    <experiments>3</experiments>
</comment>
<comment type="interaction">
    <interactant intactId="EBI-6269587">
        <id>Q9H1K4</id>
    </interactant>
    <interactant intactId="EBI-12805508">
        <id>Q3LI70</id>
        <label>KRTAP19-6</label>
    </interactant>
    <organismsDiffer>false</organismsDiffer>
    <experiments>3</experiments>
</comment>
<comment type="interaction">
    <interactant intactId="EBI-6269587">
        <id>Q9H1K4</id>
    </interactant>
    <interactant intactId="EBI-1043191">
        <id>Q9BYQ3</id>
        <label>KRTAP9-3</label>
    </interactant>
    <organismsDiffer>false</organismsDiffer>
    <experiments>3</experiments>
</comment>
<comment type="subcellular location">
    <subcellularLocation>
        <location evidence="1">Mitochondrion inner membrane</location>
        <topology evidence="2">Multi-pass membrane protein</topology>
    </subcellularLocation>
</comment>
<comment type="tissue specificity">
    <text evidence="5">Expressed in brain, to a lesser extent in testis, and poorly in all the other tissues.</text>
</comment>
<comment type="similarity">
    <text evidence="6">Belongs to the mitochondrial carrier (TC 2.A.29) family.</text>
</comment>
<name>GHC2_HUMAN</name>
<proteinExistence type="evidence at protein level"/>
<protein>
    <recommendedName>
        <fullName>Mitochondrial glutamate carrier 2</fullName>
        <shortName>GC-2</shortName>
    </recommendedName>
    <alternativeName>
        <fullName>Glutamate/H(+) symporter 2</fullName>
    </alternativeName>
    <alternativeName>
        <fullName>Solute carrier family 25 member 18</fullName>
    </alternativeName>
</protein>
<reference key="1">
    <citation type="journal article" date="2002" name="J. Biol. Chem.">
        <title>Identification of the mitochondrial glutamate transporter. Bacterial expression, reconstitution, functional characterization, and tissue distribution of two human isoforms.</title>
        <authorList>
            <person name="Fiermonte G."/>
            <person name="Palmieri L."/>
            <person name="Todisco S."/>
            <person name="Agrimi G."/>
            <person name="Palmieri F."/>
            <person name="Walker J.E."/>
        </authorList>
    </citation>
    <scope>NUCLEOTIDE SEQUENCE [MRNA]</scope>
    <scope>FUNCTION</scope>
    <scope>TRANSPORTER ACTIVITY</scope>
    <scope>BIOPHYSICOCHEMICAL PROPERTIES</scope>
    <scope>TISSUE SPECIFICITY</scope>
    <source>
        <tissue>Brain</tissue>
    </source>
</reference>
<reference key="2">
    <citation type="journal article" date="2001" name="Genome Res.">
        <title>Analysis of the cat eye syndrome critical region in humans and the region of conserved synteny in mice: a search for candidate genes at or near the human chromosome 22 pericentromere.</title>
        <authorList>
            <person name="Footz T.K."/>
            <person name="Brinkman-Mills P."/>
            <person name="Banting G.S."/>
            <person name="Maier S.A."/>
            <person name="Riazi M.A."/>
            <person name="Bridgland L.J."/>
            <person name="Hu S."/>
            <person name="Birren B."/>
            <person name="Minoshima S."/>
            <person name="Shimizu N."/>
            <person name="Pan H."/>
            <person name="Nguyen T."/>
            <person name="Fang F."/>
            <person name="Fu Y."/>
            <person name="Ray L."/>
            <person name="Wu H."/>
            <person name="Shaull S."/>
            <person name="Phan S."/>
            <person name="Yao Z."/>
            <person name="Chen F."/>
            <person name="Huan A."/>
            <person name="Hu P."/>
            <person name="Wang Q."/>
            <person name="Loh P."/>
            <person name="Qi S."/>
            <person name="Roe B.A."/>
            <person name="McDermid H.E."/>
        </authorList>
    </citation>
    <scope>NUCLEOTIDE SEQUENCE [MRNA]</scope>
</reference>
<reference key="3">
    <citation type="journal article" date="2004" name="Genome Biol.">
        <title>A genome annotation-driven approach to cloning the human ORFeome.</title>
        <authorList>
            <person name="Collins J.E."/>
            <person name="Wright C.L."/>
            <person name="Edwards C.A."/>
            <person name="Davis M.P."/>
            <person name="Grinham J.A."/>
            <person name="Cole C.G."/>
            <person name="Goward M.E."/>
            <person name="Aguado B."/>
            <person name="Mallya M."/>
            <person name="Mokrab Y."/>
            <person name="Huckle E.J."/>
            <person name="Beare D.M."/>
            <person name="Dunham I."/>
        </authorList>
    </citation>
    <scope>NUCLEOTIDE SEQUENCE [LARGE SCALE MRNA]</scope>
</reference>
<reference key="4">
    <citation type="journal article" date="2004" name="Genome Res.">
        <title>The status, quality, and expansion of the NIH full-length cDNA project: the Mammalian Gene Collection (MGC).</title>
        <authorList>
            <consortium name="The MGC Project Team"/>
        </authorList>
    </citation>
    <scope>NUCLEOTIDE SEQUENCE [LARGE SCALE MRNA]</scope>
    <source>
        <tissue>Brain</tissue>
    </source>
</reference>
<reference key="5">
    <citation type="journal article" date="2014" name="J. Proteomics">
        <title>An enzyme assisted RP-RPLC approach for in-depth analysis of human liver phosphoproteome.</title>
        <authorList>
            <person name="Bian Y."/>
            <person name="Song C."/>
            <person name="Cheng K."/>
            <person name="Dong M."/>
            <person name="Wang F."/>
            <person name="Huang J."/>
            <person name="Sun D."/>
            <person name="Wang L."/>
            <person name="Ye M."/>
            <person name="Zou H."/>
        </authorList>
    </citation>
    <scope>PHOSPHORYLATION [LARGE SCALE ANALYSIS] AT SER-145</scope>
    <scope>IDENTIFICATION BY MASS SPECTROMETRY [LARGE SCALE ANALYSIS]</scope>
    <source>
        <tissue>Liver</tissue>
    </source>
</reference>
<dbReference type="EMBL" id="AJ428203">
    <property type="protein sequence ID" value="CAD21008.1"/>
    <property type="molecule type" value="mRNA"/>
</dbReference>
<dbReference type="EMBL" id="AY008285">
    <property type="protein sequence ID" value="AAG22855.1"/>
    <property type="molecule type" value="mRNA"/>
</dbReference>
<dbReference type="EMBL" id="CR456578">
    <property type="protein sequence ID" value="CAG30464.1"/>
    <property type="molecule type" value="mRNA"/>
</dbReference>
<dbReference type="EMBL" id="BC031644">
    <property type="protein sequence ID" value="AAH31644.1"/>
    <property type="molecule type" value="mRNA"/>
</dbReference>
<dbReference type="CCDS" id="CCDS13744.1"/>
<dbReference type="RefSeq" id="NP_001290413.1">
    <property type="nucleotide sequence ID" value="NM_001303484.2"/>
</dbReference>
<dbReference type="RefSeq" id="NP_113669.1">
    <property type="nucleotide sequence ID" value="NM_031481.3"/>
</dbReference>
<dbReference type="RefSeq" id="XP_011544453.1">
    <property type="nucleotide sequence ID" value="XM_011546151.2"/>
</dbReference>
<dbReference type="RefSeq" id="XP_011544454.1">
    <property type="nucleotide sequence ID" value="XM_011546152.1"/>
</dbReference>
<dbReference type="RefSeq" id="XP_011544455.1">
    <property type="nucleotide sequence ID" value="XM_011546153.2"/>
</dbReference>
<dbReference type="RefSeq" id="XP_011544456.1">
    <property type="nucleotide sequence ID" value="XM_011546154.2"/>
</dbReference>
<dbReference type="RefSeq" id="XP_016884457.1">
    <property type="nucleotide sequence ID" value="XM_017028968.1"/>
</dbReference>
<dbReference type="SMR" id="Q9H1K4"/>
<dbReference type="BioGRID" id="123744">
    <property type="interactions" value="40"/>
</dbReference>
<dbReference type="FunCoup" id="Q9H1K4">
    <property type="interactions" value="117"/>
</dbReference>
<dbReference type="IntAct" id="Q9H1K4">
    <property type="interactions" value="29"/>
</dbReference>
<dbReference type="MINT" id="Q9H1K4"/>
<dbReference type="STRING" id="9606.ENSP00000329033"/>
<dbReference type="DrugBank" id="DB00142">
    <property type="generic name" value="Glutamic acid"/>
</dbReference>
<dbReference type="TCDB" id="2.A.29.14.5">
    <property type="family name" value="the mitochondrial carrier (mc) family"/>
</dbReference>
<dbReference type="iPTMnet" id="Q9H1K4"/>
<dbReference type="PhosphoSitePlus" id="Q9H1K4"/>
<dbReference type="SwissPalm" id="Q9H1K4"/>
<dbReference type="BioMuta" id="SLC25A18"/>
<dbReference type="DMDM" id="20140247"/>
<dbReference type="jPOST" id="Q9H1K4"/>
<dbReference type="MassIVE" id="Q9H1K4"/>
<dbReference type="PaxDb" id="9606-ENSP00000329033"/>
<dbReference type="PeptideAtlas" id="Q9H1K4"/>
<dbReference type="ProteomicsDB" id="80424"/>
<dbReference type="Antibodypedia" id="22673">
    <property type="antibodies" value="69 antibodies from 17 providers"/>
</dbReference>
<dbReference type="DNASU" id="83733"/>
<dbReference type="Ensembl" id="ENST00000327451.11">
    <property type="protein sequence ID" value="ENSP00000329033.5"/>
    <property type="gene ID" value="ENSG00000182902.14"/>
</dbReference>
<dbReference type="Ensembl" id="ENST00000399813.1">
    <property type="protein sequence ID" value="ENSP00000382710.1"/>
    <property type="gene ID" value="ENSG00000182902.14"/>
</dbReference>
<dbReference type="GeneID" id="83733"/>
<dbReference type="KEGG" id="hsa:83733"/>
<dbReference type="MANE-Select" id="ENST00000327451.11">
    <property type="protein sequence ID" value="ENSP00000329033.5"/>
    <property type="RefSeq nucleotide sequence ID" value="NM_031481.3"/>
    <property type="RefSeq protein sequence ID" value="NP_113669.1"/>
</dbReference>
<dbReference type="UCSC" id="uc002zmp.2">
    <property type="organism name" value="human"/>
</dbReference>
<dbReference type="AGR" id="HGNC:10988"/>
<dbReference type="CTD" id="83733"/>
<dbReference type="DisGeNET" id="83733"/>
<dbReference type="GeneCards" id="SLC25A18"/>
<dbReference type="HGNC" id="HGNC:10988">
    <property type="gene designation" value="SLC25A18"/>
</dbReference>
<dbReference type="HPA" id="ENSG00000182902">
    <property type="expression patterns" value="Group enriched (brain, liver)"/>
</dbReference>
<dbReference type="MIM" id="609303">
    <property type="type" value="gene"/>
</dbReference>
<dbReference type="neXtProt" id="NX_Q9H1K4"/>
<dbReference type="OpenTargets" id="ENSG00000182902"/>
<dbReference type="PharmGKB" id="PA35864"/>
<dbReference type="VEuPathDB" id="HostDB:ENSG00000182902"/>
<dbReference type="eggNOG" id="KOG0750">
    <property type="taxonomic scope" value="Eukaryota"/>
</dbReference>
<dbReference type="GeneTree" id="ENSGT00940000162050"/>
<dbReference type="HOGENOM" id="CLU_015166_3_4_1"/>
<dbReference type="InParanoid" id="Q9H1K4"/>
<dbReference type="OMA" id="CTRRIMR"/>
<dbReference type="OrthoDB" id="2382881at2759"/>
<dbReference type="PAN-GO" id="Q9H1K4">
    <property type="GO annotations" value="5 GO annotations based on evolutionary models"/>
</dbReference>
<dbReference type="PhylomeDB" id="Q9H1K4"/>
<dbReference type="TreeFam" id="TF313209"/>
<dbReference type="PathwayCommons" id="Q9H1K4"/>
<dbReference type="Reactome" id="R-HSA-428643">
    <property type="pathway name" value="Organic anion transporters"/>
</dbReference>
<dbReference type="Reactome" id="R-HSA-9856872">
    <property type="pathway name" value="Malate-aspartate shuttle"/>
</dbReference>
<dbReference type="SignaLink" id="Q9H1K4"/>
<dbReference type="BioGRID-ORCS" id="83733">
    <property type="hits" value="14 hits in 1151 CRISPR screens"/>
</dbReference>
<dbReference type="CD-CODE" id="FB4E32DD">
    <property type="entry name" value="Presynaptic clusters and postsynaptic densities"/>
</dbReference>
<dbReference type="ChiTaRS" id="SLC25A18">
    <property type="organism name" value="human"/>
</dbReference>
<dbReference type="GenomeRNAi" id="83733"/>
<dbReference type="Pharos" id="Q9H1K4">
    <property type="development level" value="Tbio"/>
</dbReference>
<dbReference type="PRO" id="PR:Q9H1K4"/>
<dbReference type="Proteomes" id="UP000005640">
    <property type="component" value="Chromosome 22"/>
</dbReference>
<dbReference type="RNAct" id="Q9H1K4">
    <property type="molecule type" value="protein"/>
</dbReference>
<dbReference type="Bgee" id="ENSG00000182902">
    <property type="expression patterns" value="Expressed in medial globus pallidus and 119 other cell types or tissues"/>
</dbReference>
<dbReference type="ExpressionAtlas" id="Q9H1K4">
    <property type="expression patterns" value="baseline and differential"/>
</dbReference>
<dbReference type="GO" id="GO:0005743">
    <property type="term" value="C:mitochondrial inner membrane"/>
    <property type="evidence" value="ECO:0000250"/>
    <property type="project" value="UniProtKB"/>
</dbReference>
<dbReference type="GO" id="GO:0005739">
    <property type="term" value="C:mitochondrion"/>
    <property type="evidence" value="ECO:0006056"/>
    <property type="project" value="FlyBase"/>
</dbReference>
<dbReference type="GO" id="GO:0005280">
    <property type="term" value="F:amino acid:proton symporter activity"/>
    <property type="evidence" value="ECO:0000314"/>
    <property type="project" value="UniProtKB"/>
</dbReference>
<dbReference type="GO" id="GO:0015183">
    <property type="term" value="F:L-aspartate transmembrane transporter activity"/>
    <property type="evidence" value="ECO:0000318"/>
    <property type="project" value="GO_Central"/>
</dbReference>
<dbReference type="GO" id="GO:0005313">
    <property type="term" value="F:L-glutamate transmembrane transporter activity"/>
    <property type="evidence" value="ECO:0000318"/>
    <property type="project" value="GO_Central"/>
</dbReference>
<dbReference type="GO" id="GO:0015810">
    <property type="term" value="P:aspartate transmembrane transport"/>
    <property type="evidence" value="ECO:0000318"/>
    <property type="project" value="GO_Central"/>
</dbReference>
<dbReference type="GO" id="GO:0015813">
    <property type="term" value="P:L-glutamate transmembrane transport"/>
    <property type="evidence" value="ECO:0000314"/>
    <property type="project" value="UniProtKB"/>
</dbReference>
<dbReference type="GO" id="GO:0043490">
    <property type="term" value="P:malate-aspartate shuttle"/>
    <property type="evidence" value="ECO:0000318"/>
    <property type="project" value="GO_Central"/>
</dbReference>
<dbReference type="GO" id="GO:0006811">
    <property type="term" value="P:monoatomic ion transport"/>
    <property type="evidence" value="ECO:0000304"/>
    <property type="project" value="Reactome"/>
</dbReference>
<dbReference type="FunFam" id="1.50.40.10:FF:000026">
    <property type="entry name" value="Putative mitochondrial glutamate carrier 2"/>
    <property type="match status" value="1"/>
</dbReference>
<dbReference type="Gene3D" id="1.50.40.10">
    <property type="entry name" value="Mitochondrial carrier domain"/>
    <property type="match status" value="1"/>
</dbReference>
<dbReference type="InterPro" id="IPR002067">
    <property type="entry name" value="Mit_carrier"/>
</dbReference>
<dbReference type="InterPro" id="IPR051028">
    <property type="entry name" value="Mito_Solute_Carrier"/>
</dbReference>
<dbReference type="InterPro" id="IPR018108">
    <property type="entry name" value="Mitochondrial_sb/sol_carrier"/>
</dbReference>
<dbReference type="InterPro" id="IPR023395">
    <property type="entry name" value="Mt_carrier_dom_sf"/>
</dbReference>
<dbReference type="PANTHER" id="PTHR45678">
    <property type="entry name" value="MITOCHONDRIAL 2-OXODICARBOXYLATE CARRIER 1-RELATED"/>
    <property type="match status" value="1"/>
</dbReference>
<dbReference type="PANTHER" id="PTHR45678:SF11">
    <property type="entry name" value="MITOCHONDRIAL GLUTAMATE CARRIER 2"/>
    <property type="match status" value="1"/>
</dbReference>
<dbReference type="Pfam" id="PF00153">
    <property type="entry name" value="Mito_carr"/>
    <property type="match status" value="3"/>
</dbReference>
<dbReference type="PRINTS" id="PR00926">
    <property type="entry name" value="MITOCARRIER"/>
</dbReference>
<dbReference type="SUPFAM" id="SSF103506">
    <property type="entry name" value="Mitochondrial carrier"/>
    <property type="match status" value="1"/>
</dbReference>
<dbReference type="PROSITE" id="PS50920">
    <property type="entry name" value="SOLCAR"/>
    <property type="match status" value="3"/>
</dbReference>
<keyword id="KW-0472">Membrane</keyword>
<keyword id="KW-0496">Mitochondrion</keyword>
<keyword id="KW-0999">Mitochondrion inner membrane</keyword>
<keyword id="KW-0597">Phosphoprotein</keyword>
<keyword id="KW-1267">Proteomics identification</keyword>
<keyword id="KW-1185">Reference proteome</keyword>
<keyword id="KW-0677">Repeat</keyword>
<keyword id="KW-0769">Symport</keyword>
<keyword id="KW-0812">Transmembrane</keyword>
<keyword id="KW-1133">Transmembrane helix</keyword>
<keyword id="KW-0813">Transport</keyword>